<comment type="function">
    <text evidence="9 18 19">Tyrosine--tRNA ligase that catalyzes the attachment of tyrosine to tRNA(Tyr) in a two-step reaction: tyrosine is first activated by ATP to form Tyr-AMP and then transferred to the acceptor end of tRNA(Tyr) (Probable) (PubMed:25533949). Also acts as a positive regulator of poly-ADP-ribosylation in the nucleus, independently of its tyrosine--tRNA ligase activity (PubMed:25533949). Activity is switched upon resveratrol-binding: resveratrol strongly inhibits the tyrosine--tRNA ligase activity and promotes relocalization to the nucleus, where YARS1 specifically stimulates the poly-ADP-ribosyltransferase activity of PARP1 (PubMed:25533949).</text>
</comment>
<comment type="catalytic activity">
    <reaction evidence="7 9 14 18">
        <text>tRNA(Tyr) + L-tyrosine + ATP = L-tyrosyl-tRNA(Tyr) + AMP + diphosphate + H(+)</text>
        <dbReference type="Rhea" id="RHEA:10220"/>
        <dbReference type="Rhea" id="RHEA-COMP:9706"/>
        <dbReference type="Rhea" id="RHEA-COMP:9707"/>
        <dbReference type="ChEBI" id="CHEBI:15378"/>
        <dbReference type="ChEBI" id="CHEBI:30616"/>
        <dbReference type="ChEBI" id="CHEBI:33019"/>
        <dbReference type="ChEBI" id="CHEBI:58315"/>
        <dbReference type="ChEBI" id="CHEBI:78442"/>
        <dbReference type="ChEBI" id="CHEBI:78536"/>
        <dbReference type="ChEBI" id="CHEBI:456215"/>
        <dbReference type="EC" id="6.1.1.1"/>
    </reaction>
    <physiologicalReaction direction="left-to-right" evidence="7 9 14 18">
        <dbReference type="Rhea" id="RHEA:10221"/>
    </physiologicalReaction>
</comment>
<comment type="activity regulation">
    <text evidence="9">Resveratrol strongly inhibits the tyrosine--tRNA ligase activity.</text>
</comment>
<comment type="subunit">
    <text evidence="3 5 9 12">Homodimer (PubMed:12427973, PubMed:14671330, PubMed:30304524). Interacts (when binding to resveratrol) with PARP1; interaction stimulates the poly-ADP-ribosyltransferase activity of PARP1 (PubMed:25533949).</text>
</comment>
<comment type="interaction">
    <interactant intactId="EBI-1048893">
        <id>P54577</id>
    </interactant>
    <interactant intactId="EBI-5661893">
        <id>Q86SG2</id>
        <label>ANKRD23</label>
    </interactant>
    <organismsDiffer>false</organismsDiffer>
    <experiments>3</experiments>
</comment>
<comment type="interaction">
    <interactant intactId="EBI-1048893">
        <id>P54577</id>
    </interactant>
    <interactant intactId="EBI-25843552">
        <id>Q96DX5-3</id>
        <label>ASB9</label>
    </interactant>
    <organismsDiffer>false</organismsDiffer>
    <experiments>3</experiments>
</comment>
<comment type="interaction">
    <interactant intactId="EBI-1048893">
        <id>P54577</id>
    </interactant>
    <interactant intactId="EBI-2410266">
        <id>Q8WXF7</id>
        <label>ATL1</label>
    </interactant>
    <organismsDiffer>false</organismsDiffer>
    <experiments>3</experiments>
</comment>
<comment type="interaction">
    <interactant intactId="EBI-1048893">
        <id>P54577</id>
    </interactant>
    <interactant intactId="EBI-11974585">
        <id>Q14781-2</id>
        <label>CBX2</label>
    </interactant>
    <organismsDiffer>false</organismsDiffer>
    <experiments>3</experiments>
</comment>
<comment type="interaction">
    <interactant intactId="EBI-1048893">
        <id>P54577</id>
    </interactant>
    <interactant intactId="EBI-21796846">
        <id>Q5M9N0-2</id>
        <label>CCDC158</label>
    </interactant>
    <organismsDiffer>false</organismsDiffer>
    <experiments>3</experiments>
</comment>
<comment type="interaction">
    <interactant intactId="EBI-1048893">
        <id>P54577</id>
    </interactant>
    <interactant intactId="EBI-11526150">
        <id>Q8NHQ1-3</id>
        <label>CEP70</label>
    </interactant>
    <organismsDiffer>false</organismsDiffer>
    <experiments>3</experiments>
</comment>
<comment type="interaction">
    <interactant intactId="EBI-1048893">
        <id>P54577</id>
    </interactant>
    <interactant intactId="EBI-350590">
        <id>Q9UNS2</id>
        <label>COPS3</label>
    </interactant>
    <organismsDiffer>false</organismsDiffer>
    <experiments>3</experiments>
</comment>
<comment type="interaction">
    <interactant intactId="EBI-1048893">
        <id>P54577</id>
    </interactant>
    <interactant intactId="EBI-2868909">
        <id>Q9H3K2</id>
        <label>GHITM</label>
    </interactant>
    <organismsDiffer>false</organismsDiffer>
    <experiments>3</experiments>
</comment>
<comment type="interaction">
    <interactant intactId="EBI-1048893">
        <id>P54577</id>
    </interactant>
    <interactant intactId="EBI-749311">
        <id>P37235</id>
        <label>HPCAL1</label>
    </interactant>
    <organismsDiffer>false</organismsDiffer>
    <experiments>3</experiments>
</comment>
<comment type="interaction">
    <interactant intactId="EBI-1048893">
        <id>P54577</id>
    </interactant>
    <interactant intactId="EBI-5651487">
        <id>Q9UBF1</id>
        <label>MAGEC2</label>
    </interactant>
    <organismsDiffer>false</organismsDiffer>
    <experiments>3</experiments>
</comment>
<comment type="interaction">
    <interactant intactId="EBI-1048893">
        <id>P54577</id>
    </interactant>
    <interactant intactId="EBI-10694433">
        <id>Q8N7B6-2</id>
        <label>PACRGL</label>
    </interactant>
    <organismsDiffer>false</organismsDiffer>
    <experiments>3</experiments>
</comment>
<comment type="interaction">
    <interactant intactId="EBI-1048893">
        <id>P54577</id>
    </interactant>
    <interactant intactId="EBI-355676">
        <id>P09874</id>
        <label>PARP1</label>
    </interactant>
    <organismsDiffer>false</organismsDiffer>
    <experiments>5</experiments>
</comment>
<comment type="interaction">
    <interactant intactId="EBI-1048893">
        <id>P54577</id>
    </interactant>
    <interactant intactId="EBI-629434">
        <id>O75925</id>
        <label>PIAS1</label>
    </interactant>
    <organismsDiffer>false</organismsDiffer>
    <experiments>3</experiments>
</comment>
<comment type="interaction">
    <interactant intactId="EBI-1048893">
        <id>P54577</id>
    </interactant>
    <interactant intactId="EBI-12898981">
        <id>Q6P1M0-2</id>
        <label>SLC27A4</label>
    </interactant>
    <organismsDiffer>false</organismsDiffer>
    <experiments>3</experiments>
</comment>
<comment type="interaction">
    <interactant intactId="EBI-1048893">
        <id>P54577</id>
    </interactant>
    <interactant intactId="EBI-2822550">
        <id>Q8IYM2</id>
        <label>SLFN12</label>
    </interactant>
    <organismsDiffer>false</organismsDiffer>
    <experiments>3</experiments>
</comment>
<comment type="interaction">
    <interactant intactId="EBI-1048893">
        <id>P54577</id>
    </interactant>
    <interactant intactId="EBI-11959123">
        <id>Q99932-2</id>
        <label>SPAG8</label>
    </interactant>
    <organismsDiffer>false</organismsDiffer>
    <experiments>3</experiments>
</comment>
<comment type="interaction">
    <interactant intactId="EBI-1048893">
        <id>P54577</id>
    </interactant>
    <interactant intactId="EBI-2116184">
        <id>Q8IYN2</id>
        <label>TCEAL8</label>
    </interactant>
    <organismsDiffer>false</organismsDiffer>
    <experiments>3</experiments>
</comment>
<comment type="interaction">
    <interactant intactId="EBI-1048893">
        <id>P54577</id>
    </interactant>
    <interactant intactId="EBI-717634">
        <id>P17024</id>
        <label>ZNF20</label>
    </interactant>
    <organismsDiffer>false</organismsDiffer>
    <experiments>3</experiments>
</comment>
<comment type="interaction">
    <interactant intactId="EBI-1048893">
        <id>P54577</id>
    </interactant>
    <interactant intactId="EBI-10259496">
        <id>Q86V28</id>
    </interactant>
    <organismsDiffer>false</organismsDiffer>
    <experiments>3</experiments>
</comment>
<comment type="subcellular location">
    <subcellularLocation>
        <location evidence="6 12 19">Cytoplasm</location>
    </subcellularLocation>
    <subcellularLocation>
        <location evidence="7 9">Nucleus</location>
    </subcellularLocation>
    <text evidence="9">Cytoplasmic in normal conditions (PubMed:25533949). Resveratrol-binding in response to serum starvation promotes relocalization to the nucleus (PubMed:25533949).</text>
</comment>
<comment type="domain">
    <text evidence="7">The nuclear localization signal, which mediates localization to the nucleus, is also important for interacting with tRNA(Tyr), suggesting that it is sterically blocked when tRNA(Tyr) is bound.</text>
</comment>
<comment type="disease" evidence="6">
    <disease id="DI-00265">
        <name>Charcot-Marie-Tooth disease, dominant intermediate C</name>
        <acronym>CMTDIC</acronym>
        <description>A form of Charcot-Marie-Tooth disease, a disorder of the peripheral nervous system, characterized by progressive weakness and atrophy, initially of the peroneal muscles and later of the distal muscles of the arms. The dominant intermediate type C is characterized by clinical and pathologic features intermediate between demyelinating and axonal peripheral neuropathies, and motor median nerve conduction velocities ranging from 25 to 45 m/sec.</description>
        <dbReference type="MIM" id="608323"/>
    </disease>
    <text>The disease is caused by variants affecting the gene represented in this entry.</text>
</comment>
<comment type="disease" evidence="10 11 12">
    <disease id="DI-06161">
        <name>Neurologic, endocrine, and pancreatic disease, multisystem, infantile-onset 2</name>
        <acronym>IMNEPD2</acronym>
        <description>An autosomal recessive disorder with variable clinical manifestations and severity. Main features include cholestatic hepatitis, poor feeding, poor overall growth, and hypoglycemia apparent from infancy. Most patients have variable global developmental delay, sensorineural deafness, retinal abnormalities with visual defects, and hypotonia. Some patients have endocrine abnormalities. Brain imaging often shows dysmyelination, thin corpus callosum, cerebral atrophy, and white matter abnormalities. Death in early childhood may occur.</description>
        <dbReference type="MIM" id="619418"/>
    </disease>
    <text>The disease is caused by variants affecting the gene represented in this entry.</text>
</comment>
<comment type="disease">
    <text evidence="13">Defects in YARS1 may be the cause of proximal-predominant motor neuropathy. Affected individuals may develop tremors, cramping of hands, asymmetric weakness in the upper and lower extremities, and present with elevated creatine kinase levels.</text>
</comment>
<comment type="similarity">
    <text evidence="17">Belongs to the class-I aminoacyl-tRNA synthetase family.</text>
</comment>
<comment type="sequence caution" evidence="17">
    <conflict type="frameshift">
        <sequence resource="EMBL-CDS" id="AAB39406"/>
    </conflict>
</comment>
<name>SYYC_HUMAN</name>
<sequence>MGDAPSPEEKLHLITRNLQEVLGEEKLKEILKERELKIYWGTATTGKPHVAYFVPMSKIADFLKAGCEVTILFADLHAYLDNMKAPWELLELRVSYYENVIKAMLESIGVPLEKLKFIKGTDYQLSKEYTLDVYRLSSVVTQHDSKKAGAEVVKQVEHPLLSGLLYPGLQALDEEYLKVDAQFGGIDQRKIFTFAEKYLPALGYSKRVHLMNPMVPGLTGSKMSSSEEESKIDLLDRKEDVKKKLKKAFCEPGNVENNGVLSFIKHVLFPLKSEFVILRDEKWGGNKTYTAYVDLEKDFAAEVVHPGDLKNSVEVALNKLLDPIREKFNTPALKKLASAAYPDPSKQKPMAKGPAKNSEPEEVIPSRLDIRVGKIITVEKHPDADSLYVEKIDVGEAEPRTVVSGLVQFVPKEELQDRLVVVLCNLKPQKMRGVESQGMLLCASIEGINRQVEPLDPPAGSAPGEHVFVKGYEKGQPDEELKPKKKVFEKLQADFKISEECIAQWKQTNFMTKLGSISCKSLKGGNIS</sequence>
<proteinExistence type="evidence at protein level"/>
<evidence type="ECO:0000255" key="1">
    <source>
        <dbReference type="PROSITE-ProRule" id="PRU00209"/>
    </source>
</evidence>
<evidence type="ECO:0000256" key="2">
    <source>
        <dbReference type="SAM" id="MobiDB-lite"/>
    </source>
</evidence>
<evidence type="ECO:0000269" key="3">
    <source>
    </source>
</evidence>
<evidence type="ECO:0000269" key="4">
    <source>
    </source>
</evidence>
<evidence type="ECO:0000269" key="5">
    <source>
    </source>
</evidence>
<evidence type="ECO:0000269" key="6">
    <source>
    </source>
</evidence>
<evidence type="ECO:0000269" key="7">
    <source>
    </source>
</evidence>
<evidence type="ECO:0000269" key="8">
    <source>
    </source>
</evidence>
<evidence type="ECO:0000269" key="9">
    <source>
    </source>
</evidence>
<evidence type="ECO:0000269" key="10">
    <source>
    </source>
</evidence>
<evidence type="ECO:0000269" key="11">
    <source>
    </source>
</evidence>
<evidence type="ECO:0000269" key="12">
    <source>
    </source>
</evidence>
<evidence type="ECO:0000269" key="13">
    <source>
    </source>
</evidence>
<evidence type="ECO:0000269" key="14">
    <source>
    </source>
</evidence>
<evidence type="ECO:0000269" key="15">
    <source ref="8"/>
</evidence>
<evidence type="ECO:0000303" key="16">
    <source>
    </source>
</evidence>
<evidence type="ECO:0000305" key="17"/>
<evidence type="ECO:0000305" key="18">
    <source>
    </source>
</evidence>
<evidence type="ECO:0000305" key="19">
    <source>
    </source>
</evidence>
<evidence type="ECO:0000312" key="20">
    <source>
        <dbReference type="HGNC" id="HGNC:12840"/>
    </source>
</evidence>
<evidence type="ECO:0007744" key="21">
    <source>
        <dbReference type="PDB" id="4Q93"/>
    </source>
</evidence>
<evidence type="ECO:0007744" key="22">
    <source>
        <dbReference type="PDB" id="4QBT"/>
    </source>
</evidence>
<evidence type="ECO:0007744" key="23">
    <source>
    </source>
</evidence>
<evidence type="ECO:0007744" key="24">
    <source>
    </source>
</evidence>
<evidence type="ECO:0007744" key="25">
    <source>
    </source>
</evidence>
<evidence type="ECO:0007829" key="26">
    <source>
        <dbReference type="PDB" id="1N3L"/>
    </source>
</evidence>
<evidence type="ECO:0007829" key="27">
    <source>
        <dbReference type="PDB" id="1NTG"/>
    </source>
</evidence>
<evidence type="ECO:0007829" key="28">
    <source>
        <dbReference type="PDB" id="1Q11"/>
    </source>
</evidence>
<evidence type="ECO:0007829" key="29">
    <source>
        <dbReference type="PDB" id="7ROU"/>
    </source>
</evidence>
<keyword id="KW-0002">3D-structure</keyword>
<keyword id="KW-0007">Acetylation</keyword>
<keyword id="KW-0030">Aminoacyl-tRNA synthetase</keyword>
<keyword id="KW-0067">ATP-binding</keyword>
<keyword id="KW-0144">Charcot-Marie-Tooth disease</keyword>
<keyword id="KW-0963">Cytoplasm</keyword>
<keyword id="KW-0903">Direct protein sequencing</keyword>
<keyword id="KW-0225">Disease variant</keyword>
<keyword id="KW-0436">Ligase</keyword>
<keyword id="KW-0523">Neurodegeneration</keyword>
<keyword id="KW-0622">Neuropathy</keyword>
<keyword id="KW-0547">Nucleotide-binding</keyword>
<keyword id="KW-0539">Nucleus</keyword>
<keyword id="KW-0597">Phosphoprotein</keyword>
<keyword id="KW-0648">Protein biosynthesis</keyword>
<keyword id="KW-1267">Proteomics identification</keyword>
<keyword id="KW-1185">Reference proteome</keyword>
<keyword id="KW-0694">RNA-binding</keyword>
<keyword id="KW-0820">tRNA-binding</keyword>
<organism>
    <name type="scientific">Homo sapiens</name>
    <name type="common">Human</name>
    <dbReference type="NCBI Taxonomy" id="9606"/>
    <lineage>
        <taxon>Eukaryota</taxon>
        <taxon>Metazoa</taxon>
        <taxon>Chordata</taxon>
        <taxon>Craniata</taxon>
        <taxon>Vertebrata</taxon>
        <taxon>Euteleostomi</taxon>
        <taxon>Mammalia</taxon>
        <taxon>Eutheria</taxon>
        <taxon>Euarchontoglires</taxon>
        <taxon>Primates</taxon>
        <taxon>Haplorrhini</taxon>
        <taxon>Catarrhini</taxon>
        <taxon>Hominidae</taxon>
        <taxon>Homo</taxon>
    </lineage>
</organism>
<reference key="1">
    <citation type="journal article" date="1996" name="Proc. Natl. Acad. Sci. U.S.A.">
        <title>Evidence that two present-day components needed for the genetic code appeared after nucleated cells separated from eubacteria.</title>
        <authorList>
            <person name="Ribas de Pouplana L."/>
            <person name="Frugier M."/>
            <person name="Quinn C.L."/>
            <person name="Schimmel P."/>
        </authorList>
    </citation>
    <scope>NUCLEOTIDE SEQUENCE [MRNA]</scope>
</reference>
<reference key="2">
    <citation type="journal article" date="1997" name="J. Biol. Chem.">
        <title>Human tyrosyl-tRNA synthetase shares amino acid sequence homology with a putative cytokine.</title>
        <authorList>
            <person name="Kleeman T.A."/>
            <person name="Wei D."/>
            <person name="Simpson K.L."/>
            <person name="First E.A."/>
        </authorList>
    </citation>
    <scope>NUCLEOTIDE SEQUENCE [MRNA]</scope>
    <scope>FUNCTION</scope>
    <scope>CATALYTIC ACTIVITY</scope>
    <scope>SUBCELLULAR LOCATION</scope>
</reference>
<reference key="3">
    <citation type="journal article" date="2004" name="Nat. Genet.">
        <title>Complete sequencing and characterization of 21,243 full-length human cDNAs.</title>
        <authorList>
            <person name="Ota T."/>
            <person name="Suzuki Y."/>
            <person name="Nishikawa T."/>
            <person name="Otsuki T."/>
            <person name="Sugiyama T."/>
            <person name="Irie R."/>
            <person name="Wakamatsu A."/>
            <person name="Hayashi K."/>
            <person name="Sato H."/>
            <person name="Nagai K."/>
            <person name="Kimura K."/>
            <person name="Makita H."/>
            <person name="Sekine M."/>
            <person name="Obayashi M."/>
            <person name="Nishi T."/>
            <person name="Shibahara T."/>
            <person name="Tanaka T."/>
            <person name="Ishii S."/>
            <person name="Yamamoto J."/>
            <person name="Saito K."/>
            <person name="Kawai Y."/>
            <person name="Isono Y."/>
            <person name="Nakamura Y."/>
            <person name="Nagahari K."/>
            <person name="Murakami K."/>
            <person name="Yasuda T."/>
            <person name="Iwayanagi T."/>
            <person name="Wagatsuma M."/>
            <person name="Shiratori A."/>
            <person name="Sudo H."/>
            <person name="Hosoiri T."/>
            <person name="Kaku Y."/>
            <person name="Kodaira H."/>
            <person name="Kondo H."/>
            <person name="Sugawara M."/>
            <person name="Takahashi M."/>
            <person name="Kanda K."/>
            <person name="Yokoi T."/>
            <person name="Furuya T."/>
            <person name="Kikkawa E."/>
            <person name="Omura Y."/>
            <person name="Abe K."/>
            <person name="Kamihara K."/>
            <person name="Katsuta N."/>
            <person name="Sato K."/>
            <person name="Tanikawa M."/>
            <person name="Yamazaki M."/>
            <person name="Ninomiya K."/>
            <person name="Ishibashi T."/>
            <person name="Yamashita H."/>
            <person name="Murakawa K."/>
            <person name="Fujimori K."/>
            <person name="Tanai H."/>
            <person name="Kimata M."/>
            <person name="Watanabe M."/>
            <person name="Hiraoka S."/>
            <person name="Chiba Y."/>
            <person name="Ishida S."/>
            <person name="Ono Y."/>
            <person name="Takiguchi S."/>
            <person name="Watanabe S."/>
            <person name="Yosida M."/>
            <person name="Hotuta T."/>
            <person name="Kusano J."/>
            <person name="Kanehori K."/>
            <person name="Takahashi-Fujii A."/>
            <person name="Hara H."/>
            <person name="Tanase T.-O."/>
            <person name="Nomura Y."/>
            <person name="Togiya S."/>
            <person name="Komai F."/>
            <person name="Hara R."/>
            <person name="Takeuchi K."/>
            <person name="Arita M."/>
            <person name="Imose N."/>
            <person name="Musashino K."/>
            <person name="Yuuki H."/>
            <person name="Oshima A."/>
            <person name="Sasaki N."/>
            <person name="Aotsuka S."/>
            <person name="Yoshikawa Y."/>
            <person name="Matsunawa H."/>
            <person name="Ichihara T."/>
            <person name="Shiohata N."/>
            <person name="Sano S."/>
            <person name="Moriya S."/>
            <person name="Momiyama H."/>
            <person name="Satoh N."/>
            <person name="Takami S."/>
            <person name="Terashima Y."/>
            <person name="Suzuki O."/>
            <person name="Nakagawa S."/>
            <person name="Senoh A."/>
            <person name="Mizoguchi H."/>
            <person name="Goto Y."/>
            <person name="Shimizu F."/>
            <person name="Wakebe H."/>
            <person name="Hishigaki H."/>
            <person name="Watanabe T."/>
            <person name="Sugiyama A."/>
            <person name="Takemoto M."/>
            <person name="Kawakami B."/>
            <person name="Yamazaki M."/>
            <person name="Watanabe K."/>
            <person name="Kumagai A."/>
            <person name="Itakura S."/>
            <person name="Fukuzumi Y."/>
            <person name="Fujimori Y."/>
            <person name="Komiyama M."/>
            <person name="Tashiro H."/>
            <person name="Tanigami A."/>
            <person name="Fujiwara T."/>
            <person name="Ono T."/>
            <person name="Yamada K."/>
            <person name="Fujii Y."/>
            <person name="Ozaki K."/>
            <person name="Hirao M."/>
            <person name="Ohmori Y."/>
            <person name="Kawabata A."/>
            <person name="Hikiji T."/>
            <person name="Kobatake N."/>
            <person name="Inagaki H."/>
            <person name="Ikema Y."/>
            <person name="Okamoto S."/>
            <person name="Okitani R."/>
            <person name="Kawakami T."/>
            <person name="Noguchi S."/>
            <person name="Itoh T."/>
            <person name="Shigeta K."/>
            <person name="Senba T."/>
            <person name="Matsumura K."/>
            <person name="Nakajima Y."/>
            <person name="Mizuno T."/>
            <person name="Morinaga M."/>
            <person name="Sasaki M."/>
            <person name="Togashi T."/>
            <person name="Oyama M."/>
            <person name="Hata H."/>
            <person name="Watanabe M."/>
            <person name="Komatsu T."/>
            <person name="Mizushima-Sugano J."/>
            <person name="Satoh T."/>
            <person name="Shirai Y."/>
            <person name="Takahashi Y."/>
            <person name="Nakagawa K."/>
            <person name="Okumura K."/>
            <person name="Nagase T."/>
            <person name="Nomura N."/>
            <person name="Kikuchi H."/>
            <person name="Masuho Y."/>
            <person name="Yamashita R."/>
            <person name="Nakai K."/>
            <person name="Yada T."/>
            <person name="Nakamura Y."/>
            <person name="Ohara O."/>
            <person name="Isogai T."/>
            <person name="Sugano S."/>
        </authorList>
    </citation>
    <scope>NUCLEOTIDE SEQUENCE [LARGE SCALE MRNA]</scope>
    <source>
        <tissue>Brain</tissue>
    </source>
</reference>
<reference key="4">
    <citation type="submission" date="2005-04" db="EMBL/GenBank/DDBJ databases">
        <authorList>
            <person name="Totoki Y."/>
            <person name="Toyoda A."/>
            <person name="Takeda T."/>
            <person name="Sakaki Y."/>
            <person name="Tanaka A."/>
            <person name="Yokoyama S."/>
        </authorList>
    </citation>
    <scope>NUCLEOTIDE SEQUENCE [LARGE SCALE MRNA]</scope>
</reference>
<reference key="5">
    <citation type="submission" date="2005-09" db="EMBL/GenBank/DDBJ databases">
        <authorList>
            <person name="Mural R.J."/>
            <person name="Istrail S."/>
            <person name="Sutton G.G."/>
            <person name="Florea L."/>
            <person name="Halpern A.L."/>
            <person name="Mobarry C.M."/>
            <person name="Lippert R."/>
            <person name="Walenz B."/>
            <person name="Shatkay H."/>
            <person name="Dew I."/>
            <person name="Miller J.R."/>
            <person name="Flanigan M.J."/>
            <person name="Edwards N.J."/>
            <person name="Bolanos R."/>
            <person name="Fasulo D."/>
            <person name="Halldorsson B.V."/>
            <person name="Hannenhalli S."/>
            <person name="Turner R."/>
            <person name="Yooseph S."/>
            <person name="Lu F."/>
            <person name="Nusskern D.R."/>
            <person name="Shue B.C."/>
            <person name="Zheng X.H."/>
            <person name="Zhong F."/>
            <person name="Delcher A.L."/>
            <person name="Huson D.H."/>
            <person name="Kravitz S.A."/>
            <person name="Mouchard L."/>
            <person name="Reinert K."/>
            <person name="Remington K.A."/>
            <person name="Clark A.G."/>
            <person name="Waterman M.S."/>
            <person name="Eichler E.E."/>
            <person name="Adams M.D."/>
            <person name="Hunkapiller M.W."/>
            <person name="Myers E.W."/>
            <person name="Venter J.C."/>
        </authorList>
    </citation>
    <scope>NUCLEOTIDE SEQUENCE [LARGE SCALE GENOMIC DNA]</scope>
</reference>
<reference key="6">
    <citation type="journal article" date="2004" name="Genome Res.">
        <title>The status, quality, and expansion of the NIH full-length cDNA project: the Mammalian Gene Collection (MGC).</title>
        <authorList>
            <consortium name="The MGC Project Team"/>
        </authorList>
    </citation>
    <scope>NUCLEOTIDE SEQUENCE [LARGE SCALE MRNA]</scope>
    <source>
        <tissue>Bone</tissue>
        <tissue>Lung</tissue>
    </source>
</reference>
<reference key="7">
    <citation type="journal article" date="2003" name="Nat. Biotechnol.">
        <title>Exploring proteomes and analyzing protein processing by mass spectrometric identification of sorted N-terminal peptides.</title>
        <authorList>
            <person name="Gevaert K."/>
            <person name="Goethals M."/>
            <person name="Martens L."/>
            <person name="Van Damme J."/>
            <person name="Staes A."/>
            <person name="Thomas G.R."/>
            <person name="Vandekerckhove J."/>
        </authorList>
    </citation>
    <scope>PROTEIN SEQUENCE OF 2-16</scope>
    <source>
        <tissue>Platelet</tissue>
    </source>
</reference>
<reference key="8">
    <citation type="submission" date="2004-10" db="UniProtKB">
        <authorList>
            <person name="Bienvenut W.V."/>
        </authorList>
    </citation>
    <scope>PROTEIN SEQUENCE OF 2-16</scope>
    <scope>ACETYLATION AT GLY-2</scope>
    <scope>IDENTIFICATION BY MASS SPECTROMETRY</scope>
    <source>
        <tissue>B-cell lymphoma</tissue>
    </source>
</reference>
<reference key="9">
    <citation type="journal article" date="2009" name="Anal. Chem.">
        <title>Lys-N and trypsin cover complementary parts of the phosphoproteome in a refined SCX-based approach.</title>
        <authorList>
            <person name="Gauci S."/>
            <person name="Helbig A.O."/>
            <person name="Slijper M."/>
            <person name="Krijgsveld J."/>
            <person name="Heck A.J."/>
            <person name="Mohammed S."/>
        </authorList>
    </citation>
    <scope>ACETYLATION [LARGE SCALE ANALYSIS] AT MET-1 AND GLY-2</scope>
    <scope>CLEAVAGE OF INITIATOR METHIONINE [LARGE SCALE ANALYSIS]</scope>
    <scope>IDENTIFICATION BY MASS SPECTROMETRY [LARGE SCALE ANALYSIS]</scope>
</reference>
<reference key="10">
    <citation type="journal article" date="2009" name="Science">
        <title>Lysine acetylation targets protein complexes and co-regulates major cellular functions.</title>
        <authorList>
            <person name="Choudhary C."/>
            <person name="Kumar C."/>
            <person name="Gnad F."/>
            <person name="Nielsen M.L."/>
            <person name="Rehman M."/>
            <person name="Walther T.C."/>
            <person name="Olsen J.V."/>
            <person name="Mann M."/>
        </authorList>
    </citation>
    <scope>ACETYLATION [LARGE SCALE ANALYSIS] AT LYS-197; LYS-206; LYS-474; LYS-482 AND LYS-490</scope>
    <scope>IDENTIFICATION BY MASS SPECTROMETRY [LARGE SCALE ANALYSIS]</scope>
</reference>
<reference key="11">
    <citation type="journal article" date="2011" name="BMC Syst. Biol.">
        <title>Initial characterization of the human central proteome.</title>
        <authorList>
            <person name="Burkard T.R."/>
            <person name="Planyavsky M."/>
            <person name="Kaupe I."/>
            <person name="Breitwieser F.P."/>
            <person name="Buerckstuemmer T."/>
            <person name="Bennett K.L."/>
            <person name="Superti-Furga G."/>
            <person name="Colinge J."/>
        </authorList>
    </citation>
    <scope>IDENTIFICATION BY MASS SPECTROMETRY [LARGE SCALE ANALYSIS]</scope>
</reference>
<reference key="12">
    <citation type="journal article" date="2012" name="J. Biol. Chem.">
        <title>tRNA-controlled nuclear import of a human tRNA synthetase.</title>
        <authorList>
            <person name="Fu G."/>
            <person name="Xu T."/>
            <person name="Shi Y."/>
            <person name="Wei N."/>
            <person name="Yang X.L."/>
        </authorList>
    </citation>
    <scope>CATALYTIC ACTIVITY</scope>
    <scope>SUBCELLULAR LOCATION</scope>
    <scope>NUCLEAR LOCALIZATION SIGNAL</scope>
    <scope>MUTAGENESIS OF 242-LYS--LYS-247</scope>
</reference>
<reference key="13">
    <citation type="journal article" date="2013" name="J. Proteome Res.">
        <title>Toward a comprehensive characterization of a human cancer cell phosphoproteome.</title>
        <authorList>
            <person name="Zhou H."/>
            <person name="Di Palma S."/>
            <person name="Preisinger C."/>
            <person name="Peng M."/>
            <person name="Polat A.N."/>
            <person name="Heck A.J."/>
            <person name="Mohammed S."/>
        </authorList>
    </citation>
    <scope>PHOSPHORYLATION [LARGE SCALE ANALYSIS] AT SER-205 AND SER-386</scope>
    <scope>IDENTIFICATION BY MASS SPECTROMETRY [LARGE SCALE ANALYSIS]</scope>
    <source>
        <tissue>Cervix carcinoma</tissue>
        <tissue>Erythroleukemia</tissue>
    </source>
</reference>
<reference key="14">
    <citation type="journal article" date="2014" name="J. Proteomics">
        <title>An enzyme assisted RP-RPLC approach for in-depth analysis of human liver phosphoproteome.</title>
        <authorList>
            <person name="Bian Y."/>
            <person name="Song C."/>
            <person name="Cheng K."/>
            <person name="Dong M."/>
            <person name="Wang F."/>
            <person name="Huang J."/>
            <person name="Sun D."/>
            <person name="Wang L."/>
            <person name="Ye M."/>
            <person name="Zou H."/>
        </authorList>
    </citation>
    <scope>IDENTIFICATION BY MASS SPECTROMETRY [LARGE SCALE ANALYSIS]</scope>
    <source>
        <tissue>Liver</tissue>
    </source>
</reference>
<reference key="15">
    <citation type="journal article" date="2015" name="Proteomics">
        <title>N-terminome analysis of the human mitochondrial proteome.</title>
        <authorList>
            <person name="Vaca Jacome A.S."/>
            <person name="Rabilloud T."/>
            <person name="Schaeffer-Reiss C."/>
            <person name="Rompais M."/>
            <person name="Ayoub D."/>
            <person name="Lane L."/>
            <person name="Bairoch A."/>
            <person name="Van Dorsselaer A."/>
            <person name="Carapito C."/>
        </authorList>
    </citation>
    <scope>IDENTIFICATION BY MASS SPECTROMETRY [LARGE SCALE ANALYSIS]</scope>
</reference>
<reference key="16">
    <citation type="journal article" date="2002" name="Proc. Natl. Acad. Sci. U.S.A.">
        <title>Crystal structure of a human aminoacyl-tRNA synthetase cytokine.</title>
        <authorList>
            <person name="Yang X.-L."/>
            <person name="Skene R.J."/>
            <person name="McRee D.E."/>
            <person name="Schimmel P."/>
        </authorList>
    </citation>
    <scope>X-RAY CRYSTALLOGRAPHY (1.18 ANGSTROMS) OF 1-342</scope>
    <scope>SUBUNIT</scope>
</reference>
<reference key="17">
    <citation type="journal article" date="2003" name="Proc. Natl. Acad. Sci. U.S.A.">
        <title>Crystal structures that suggest late development of genetic code components for differentiating aromatic side chains.</title>
        <authorList>
            <person name="Yang X.-L."/>
            <person name="Otero F.J."/>
            <person name="Skene R.J."/>
            <person name="McRee D.E."/>
            <person name="Schimmel P."/>
            <person name="Ribas de Pouplana L."/>
        </authorList>
    </citation>
    <scope>X-RAY CRYSTALLOGRAPHY (1.6 ANGSTROMS) OF 1-364 IN COMPLEX WITH TYROSINE</scope>
</reference>
<reference evidence="21 22" key="18">
    <citation type="journal article" date="2015" name="Nature">
        <title>A human tRNA synthetase is a potent PARP1-activating effector target for resveratrol.</title>
        <authorList>
            <person name="Sajish M."/>
            <person name="Schimmel P."/>
        </authorList>
    </citation>
    <scope>X-RAY CRYSTALLOGRAPHY (2.10 ANGSTROMS) OF 1-364 IN COMPLEX WITH TRANS-RESVERATROL</scope>
    <scope>FUNCTION</scope>
    <scope>CATALYTIC ACTIVITY</scope>
    <scope>ACTIVITY REGULATION</scope>
    <scope>INTERACTION WITH PARP1</scope>
    <scope>SUBCELLULAR LOCATION</scope>
    <scope>MUTAGENESIS OF 242-LYS--LYS-247</scope>
</reference>
<reference key="19">
    <citation type="journal article" date="2006" name="Nat. Genet.">
        <title>Disrupted function and axonal distribution of mutant tyrosyl-tRNA synthetase in dominant intermediate Charcot-Marie-Tooth neuropathy.</title>
        <authorList>
            <person name="Jordanova A."/>
            <person name="Irobi J."/>
            <person name="Thomas F.P."/>
            <person name="Van Dijck P."/>
            <person name="Meerschaert K."/>
            <person name="Dewil M."/>
            <person name="Dierick I."/>
            <person name="Jacobs A."/>
            <person name="De Vriendt E."/>
            <person name="Guergueltcheva V."/>
            <person name="Rao C.V."/>
            <person name="Tournev I."/>
            <person name="Gondim F.A.A."/>
            <person name="D'Hooghe M."/>
            <person name="Van Gerwen V."/>
            <person name="Callaerts P."/>
            <person name="Van Den Bosch L."/>
            <person name="Timmermans J.-P."/>
            <person name="Robberecht W."/>
            <person name="Gettemans J."/>
            <person name="Thevelein J.M."/>
            <person name="De Jonghe P."/>
            <person name="Kremensky I."/>
            <person name="Timmerman V."/>
        </authorList>
    </citation>
    <scope>FUNCTION</scope>
    <scope>CATALYTIC ACTIVITY</scope>
    <scope>SUBCELLULAR LOCATION</scope>
    <scope>VARIANTS CMTDIC 153-VAL--VAL-156 DEL; ARG-41 AND LYS-196</scope>
    <scope>CHARACTERIZATION OF VARIANTS CMTDIC ARG-41 AND LYS-196</scope>
</reference>
<reference key="20">
    <citation type="journal article" date="2014" name="J. Neurol.">
        <title>Whole-exome sequencing in patients with inherited neuropathies: outcome and challenges.</title>
        <authorList>
            <person name="Schabhuettl M."/>
            <person name="Wieland T."/>
            <person name="Senderek J."/>
            <person name="Baets J."/>
            <person name="Timmerman V."/>
            <person name="De Jonghe P."/>
            <person name="Reilly M.M."/>
            <person name="Stieglbauer K."/>
            <person name="Laich E."/>
            <person name="Windhager R."/>
            <person name="Erwa W."/>
            <person name="Trajanoski S."/>
            <person name="Strom T.M."/>
            <person name="Auer-Grumbach M."/>
        </authorList>
    </citation>
    <scope>VARIANT LYS-274</scope>
</reference>
<reference key="21">
    <citation type="journal article" date="2017" name="Am. J. Med. Genet. A">
        <title>A novel multisystem disease associated with recessive mutations in the tyrosyl-tRNA synthetase (YARS) gene.</title>
        <authorList>
            <consortium name="FORGE Canada Consortium, Care4Rare Canada Consortium"/>
            <person name="Nowaczyk M.J."/>
            <person name="Huang L."/>
            <person name="Tarnopolsky M."/>
            <person name="Schwartzentruber J."/>
            <person name="Majewski J."/>
            <person name="Bulman D.E."/>
            <person name="Hartley T."/>
            <person name="Boycott K.M."/>
        </authorList>
    </citation>
    <scope>VARIANTS IMNEPD2 LEU-213 AND ARG-525</scope>
    <scope>INVOLVEMENT IN IMNEPD2</scope>
</reference>
<reference key="22">
    <citation type="journal article" date="2017" name="Genes (Basel)">
        <title>An Expanded Multi-Organ Disease Phenotype Associated with Mutations in YARS.</title>
        <authorList>
            <consortium name="University of Washington Center for Mendelian Genomics"/>
            <person name="Tracewska-Siemiatkowska A."/>
            <person name="Haer-Wigman L."/>
            <person name="Bosch D.G.M."/>
            <person name="Nickerson D."/>
            <person name="Bamshad M.J."/>
            <person name="van de Vorst M."/>
            <person name="Rendtorff N.D."/>
            <person name="Moeller C."/>
            <person name="Kjellstroem U."/>
            <person name="Andreasson S."/>
            <person name="Cremers F.P.M."/>
            <person name="Tranebjaerg L."/>
        </authorList>
    </citation>
    <scope>VARIANT IMNEPD2 SER-269</scope>
    <scope>INVOLVEMENT IN IMNEPD2</scope>
</reference>
<reference key="23">
    <citation type="journal article" date="2019" name="Hum. Mol. Genet.">
        <title>Homozygosity for a mutation affecting the catalytic domain of tyrosyl-tRNA synthetase (YARS) causes multisystem disease.</title>
        <authorList>
            <person name="Williams K.B."/>
            <person name="Brigatti K.W."/>
            <person name="Puffenberger E.G."/>
            <person name="Gonzaga-Jauregui C."/>
            <person name="Griffin L.B."/>
            <person name="Martinez E.D."/>
            <person name="Wenger O.K."/>
            <person name="Yoder M.A."/>
            <person name="Kandula V.V.R."/>
            <person name="Fox M.D."/>
            <person name="Demczko M.M."/>
            <person name="Poskitt L."/>
            <person name="Furuya K.N."/>
            <person name="Reid J.G."/>
            <person name="Overton J.D."/>
            <person name="Baras A."/>
            <person name="Miles L."/>
            <person name="Radhakrishnan K."/>
            <person name="Carson V.J."/>
            <person name="Antonellis A."/>
            <person name="Jinks R.N."/>
            <person name="Strauss K.A."/>
        </authorList>
    </citation>
    <scope>VARIANT IMNEPD2 THR-167</scope>
    <scope>CHARACTERIZATION OF VARIANT IMNEPD2 THR-167</scope>
    <scope>INVOLVEMENT IN IMNEPD2</scope>
    <scope>SUBCELLULAR LOCATION</scope>
    <scope>SUBUNIT</scope>
</reference>
<reference key="24">
    <citation type="journal article" date="2022" name="Cold Spring Harb. Mol. Case Stud.">
        <title>A missense, loss-of-function YARS1 variant in a patient with proximal-predominant motor neuropathy.</title>
        <authorList>
            <person name="Forrest M.E."/>
            <person name="Meyer A.P."/>
            <person name="Laureano Figueroa S.M."/>
            <person name="Antonellis A."/>
        </authorList>
    </citation>
    <scope>VARIANT TYR-308</scope>
    <scope>INVOLVEMENT IN PROXIMAL-PREDOMINANT MOTOR NEUROPATHY</scope>
</reference>
<feature type="chain" id="PRO_0000423285" description="Tyrosine--tRNA ligase, cytoplasmic">
    <location>
        <begin position="1"/>
        <end position="528"/>
    </location>
</feature>
<feature type="initiator methionine" description="Removed; alternate" evidence="4 15 23">
    <location>
        <position position="1"/>
    </location>
</feature>
<feature type="chain" id="PRO_0000055673" description="Tyrosine--tRNA ligase, cytoplasmic, N-terminally processed">
    <location>
        <begin position="2"/>
        <end position="528"/>
    </location>
</feature>
<feature type="domain" description="tRNA-binding" evidence="1">
    <location>
        <begin position="364"/>
        <end position="468"/>
    </location>
</feature>
<feature type="region of interest" description="Disordered" evidence="2">
    <location>
        <begin position="339"/>
        <end position="363"/>
    </location>
</feature>
<feature type="short sequence motif" description="'HIGH' region" evidence="5">
    <location>
        <begin position="44"/>
        <end position="52"/>
    </location>
</feature>
<feature type="short sequence motif" description="'KMSKS' region" evidence="5">
    <location>
        <begin position="222"/>
        <end position="226"/>
    </location>
</feature>
<feature type="short sequence motif" description="Nuclear localization signal" evidence="7">
    <location>
        <begin position="242"/>
        <end position="247"/>
    </location>
</feature>
<feature type="binding site" evidence="5 22">
    <location>
        <position position="39"/>
    </location>
    <ligand>
        <name>L-tyrosine</name>
        <dbReference type="ChEBI" id="CHEBI:58315"/>
    </ligand>
</feature>
<feature type="binding site" evidence="9 21">
    <location>
        <position position="39"/>
    </location>
    <ligand>
        <name>trans-resveratrol</name>
        <dbReference type="ChEBI" id="CHEBI:45713"/>
    </ligand>
</feature>
<feature type="binding site" evidence="5 22">
    <location>
        <position position="166"/>
    </location>
    <ligand>
        <name>L-tyrosine</name>
        <dbReference type="ChEBI" id="CHEBI:58315"/>
    </ligand>
</feature>
<feature type="binding site" evidence="5 22">
    <location>
        <position position="170"/>
    </location>
    <ligand>
        <name>L-tyrosine</name>
        <dbReference type="ChEBI" id="CHEBI:58315"/>
    </ligand>
</feature>
<feature type="binding site" evidence="9 21">
    <location>
        <position position="170"/>
    </location>
    <ligand>
        <name>trans-resveratrol</name>
        <dbReference type="ChEBI" id="CHEBI:45713"/>
    </ligand>
</feature>
<feature type="binding site" evidence="5 22">
    <location>
        <position position="173"/>
    </location>
    <ligand>
        <name>L-tyrosine</name>
        <dbReference type="ChEBI" id="CHEBI:58315"/>
    </ligand>
</feature>
<feature type="binding site" evidence="9 21">
    <location>
        <position position="173"/>
    </location>
    <ligand>
        <name>trans-resveratrol</name>
        <dbReference type="ChEBI" id="CHEBI:45713"/>
    </ligand>
</feature>
<feature type="binding site" evidence="5 22">
    <location>
        <position position="188"/>
    </location>
    <ligand>
        <name>L-tyrosine</name>
        <dbReference type="ChEBI" id="CHEBI:58315"/>
    </ligand>
</feature>
<feature type="modified residue" description="N-acetylmethionine" evidence="23">
    <location>
        <position position="1"/>
    </location>
</feature>
<feature type="modified residue" description="N-acetylglycine; in Tyrosine--tRNA ligase, cytoplasmic, N-terminally processed" evidence="15 23">
    <location>
        <position position="2"/>
    </location>
</feature>
<feature type="modified residue" description="N6-acetyllysine" evidence="24">
    <location>
        <position position="197"/>
    </location>
</feature>
<feature type="modified residue" description="Phosphoserine" evidence="25">
    <location>
        <position position="205"/>
    </location>
</feature>
<feature type="modified residue" description="N6-acetyllysine" evidence="24">
    <location>
        <position position="206"/>
    </location>
</feature>
<feature type="modified residue" description="Phosphoserine" evidence="25">
    <location>
        <position position="386"/>
    </location>
</feature>
<feature type="modified residue" description="N6-acetyllysine" evidence="24">
    <location>
        <position position="474"/>
    </location>
</feature>
<feature type="modified residue" description="N6-acetyllysine" evidence="24">
    <location>
        <position position="482"/>
    </location>
</feature>
<feature type="modified residue" description="N6-acetyllysine" evidence="24">
    <location>
        <position position="490"/>
    </location>
</feature>
<feature type="sequence variant" id="VAR_026681" description="In CMTDIC; partial loss of activity; dbSNP:rs121908833." evidence="6">
    <original>G</original>
    <variation>R</variation>
    <location>
        <position position="41"/>
    </location>
</feature>
<feature type="sequence variant" id="VAR_026682" description="In CMTDIC." evidence="6">
    <location>
        <begin position="153"/>
        <end position="156"/>
    </location>
</feature>
<feature type="sequence variant" id="VAR_086001" description="In IMNEPD2; hypomorphic variant in yeast complementation assays; decreased homodimerization; does not affect localization to the cytoplasm; dbSNP:rs1279417718." evidence="12">
    <original>P</original>
    <variation>T</variation>
    <location>
        <position position="167"/>
    </location>
</feature>
<feature type="sequence variant" id="VAR_026683" description="In dbSNP:rs2128600.">
    <original>Q</original>
    <variation>H</variation>
    <location>
        <position position="170"/>
    </location>
</feature>
<feature type="sequence variant" id="VAR_026684" description="In CMTDIC; partial loss of activity; dbSNP:rs121908834." evidence="6">
    <original>E</original>
    <variation>K</variation>
    <location>
        <position position="196"/>
    </location>
</feature>
<feature type="sequence variant" id="VAR_086002" description="In IMNEPD2; uncertain significance; dbSNP:rs1553123702." evidence="10">
    <original>P</original>
    <variation>L</variation>
    <location>
        <position position="213"/>
    </location>
</feature>
<feature type="sequence variant" id="VAR_086003" description="In IMNEPD2; uncertain significance; dbSNP:rs1653248260." evidence="11">
    <original>F</original>
    <variation>S</variation>
    <location>
        <position position="269"/>
    </location>
</feature>
<feature type="sequence variant" id="VAR_073292" description="Found in a patient with hereditary motor and sensory neuropathy; uncertain significance; dbSNP:rs758897498." evidence="8">
    <original>E</original>
    <variation>K</variation>
    <location>
        <position position="274"/>
    </location>
</feature>
<feature type="sequence variant" id="VAR_087701" description="Found in a patient with proximal-predominant motor neuropathy; likely pathogenic; loss of function; dbSNP:rs1207371448." evidence="13">
    <original>D</original>
    <variation>Y</variation>
    <location>
        <position position="308"/>
    </location>
</feature>
<feature type="sequence variant" id="VAR_086004" description="In IMNEPD2; uncertain significance; dbSNP:rs1553122256." evidence="10">
    <original>G</original>
    <variation>R</variation>
    <location>
        <position position="525"/>
    </location>
</feature>
<feature type="mutagenesis site" description="Reduced tyrosine--tRNA ligase activity." evidence="7">
    <original>KKKLKK</original>
    <variation>NNALNA</variation>
    <location>
        <begin position="242"/>
        <end position="247"/>
    </location>
</feature>
<feature type="mutagenesis site" description="Slightly reduced tyrosine--tRNA ligase activity." evidence="7">
    <original>KKKLKK</original>
    <variation>NNKLNA</variation>
    <location>
        <begin position="242"/>
        <end position="247"/>
    </location>
</feature>
<feature type="mutagenesis site" description="Abolished localization to the nucleus. Abolished tyrosine--tRNA ligase activity. Abolished ability to activate PARP1." evidence="7 9">
    <original>KKKLKK</original>
    <variation>YQFWIN</variation>
    <location>
        <begin position="242"/>
        <end position="247"/>
    </location>
</feature>
<feature type="sequence conflict" description="In Ref. 4; BAD97328." evidence="17" ref="4">
    <original>H</original>
    <variation>R</variation>
    <location>
        <position position="143"/>
    </location>
</feature>
<feature type="helix" evidence="26">
    <location>
        <begin position="7"/>
        <end position="15"/>
    </location>
</feature>
<feature type="strand" evidence="26">
    <location>
        <begin position="19"/>
        <end position="22"/>
    </location>
</feature>
<feature type="helix" evidence="26">
    <location>
        <begin position="24"/>
        <end position="31"/>
    </location>
</feature>
<feature type="strand" evidence="26">
    <location>
        <begin position="37"/>
        <end position="42"/>
    </location>
</feature>
<feature type="helix" evidence="26">
    <location>
        <begin position="50"/>
        <end position="52"/>
    </location>
</feature>
<feature type="helix" evidence="26">
    <location>
        <begin position="53"/>
        <end position="64"/>
    </location>
</feature>
<feature type="strand" evidence="26">
    <location>
        <begin position="68"/>
        <end position="73"/>
    </location>
</feature>
<feature type="helix" evidence="26">
    <location>
        <begin position="75"/>
        <end position="80"/>
    </location>
</feature>
<feature type="turn" evidence="26">
    <location>
        <begin position="81"/>
        <end position="84"/>
    </location>
</feature>
<feature type="helix" evidence="26">
    <location>
        <begin position="87"/>
        <end position="108"/>
    </location>
</feature>
<feature type="helix" evidence="29">
    <location>
        <begin position="112"/>
        <end position="114"/>
    </location>
</feature>
<feature type="strand" evidence="26">
    <location>
        <begin position="115"/>
        <end position="119"/>
    </location>
</feature>
<feature type="helix" evidence="26">
    <location>
        <begin position="120"/>
        <end position="122"/>
    </location>
</feature>
<feature type="turn" evidence="26">
    <location>
        <begin position="123"/>
        <end position="125"/>
    </location>
</feature>
<feature type="helix" evidence="26">
    <location>
        <begin position="127"/>
        <end position="137"/>
    </location>
</feature>
<feature type="helix" evidence="26">
    <location>
        <begin position="142"/>
        <end position="148"/>
    </location>
</feature>
<feature type="turn" evidence="26">
    <location>
        <begin position="149"/>
        <end position="152"/>
    </location>
</feature>
<feature type="helix" evidence="26">
    <location>
        <begin position="161"/>
        <end position="176"/>
    </location>
</feature>
<feature type="strand" evidence="26">
    <location>
        <begin position="180"/>
        <end position="185"/>
    </location>
</feature>
<feature type="helix" evidence="26">
    <location>
        <begin position="186"/>
        <end position="188"/>
    </location>
</feature>
<feature type="helix" evidence="26">
    <location>
        <begin position="189"/>
        <end position="198"/>
    </location>
</feature>
<feature type="helix" evidence="26">
    <location>
        <begin position="199"/>
        <end position="202"/>
    </location>
</feature>
<feature type="strand" evidence="26">
    <location>
        <begin position="208"/>
        <end position="212"/>
    </location>
</feature>
<feature type="strand" evidence="29">
    <location>
        <begin position="218"/>
        <end position="220"/>
    </location>
</feature>
<feature type="helix" evidence="26">
    <location>
        <begin position="238"/>
        <end position="246"/>
    </location>
</feature>
<feature type="strand" evidence="28">
    <location>
        <begin position="247"/>
        <end position="249"/>
    </location>
</feature>
<feature type="helix" evidence="26">
    <location>
        <begin position="259"/>
        <end position="266"/>
    </location>
</feature>
<feature type="turn" evidence="26">
    <location>
        <begin position="267"/>
        <end position="273"/>
    </location>
</feature>
<feature type="strand" evidence="26">
    <location>
        <begin position="275"/>
        <end position="277"/>
    </location>
</feature>
<feature type="helix" evidence="26">
    <location>
        <begin position="281"/>
        <end position="283"/>
    </location>
</feature>
<feature type="strand" evidence="26">
    <location>
        <begin position="287"/>
        <end position="291"/>
    </location>
</feature>
<feature type="helix" evidence="26">
    <location>
        <begin position="292"/>
        <end position="300"/>
    </location>
</feature>
<feature type="helix" evidence="26">
    <location>
        <begin position="306"/>
        <end position="327"/>
    </location>
</feature>
<feature type="helix" evidence="26">
    <location>
        <begin position="331"/>
        <end position="340"/>
    </location>
</feature>
<feature type="helix" evidence="27">
    <location>
        <begin position="365"/>
        <end position="367"/>
    </location>
</feature>
<feature type="strand" evidence="27">
    <location>
        <begin position="370"/>
        <end position="380"/>
    </location>
</feature>
<feature type="strand" evidence="27">
    <location>
        <begin position="388"/>
        <end position="393"/>
    </location>
</feature>
<feature type="strand" evidence="27">
    <location>
        <begin position="395"/>
        <end position="398"/>
    </location>
</feature>
<feature type="strand" evidence="27">
    <location>
        <begin position="400"/>
        <end position="405"/>
    </location>
</feature>
<feature type="turn" evidence="27">
    <location>
        <begin position="407"/>
        <end position="409"/>
    </location>
</feature>
<feature type="helix" evidence="27">
    <location>
        <begin position="412"/>
        <end position="414"/>
    </location>
</feature>
<feature type="turn" evidence="27">
    <location>
        <begin position="415"/>
        <end position="417"/>
    </location>
</feature>
<feature type="strand" evidence="27">
    <location>
        <begin position="419"/>
        <end position="423"/>
    </location>
</feature>
<feature type="strand" evidence="27">
    <location>
        <begin position="429"/>
        <end position="431"/>
    </location>
</feature>
<feature type="strand" evidence="27">
    <location>
        <begin position="434"/>
        <end position="436"/>
    </location>
</feature>
<feature type="strand" evidence="27">
    <location>
        <begin position="442"/>
        <end position="454"/>
    </location>
</feature>
<feature type="strand" evidence="27">
    <location>
        <begin position="466"/>
        <end position="469"/>
    </location>
</feature>
<feature type="strand" evidence="27">
    <location>
        <begin position="479"/>
        <end position="481"/>
    </location>
</feature>
<feature type="helix" evidence="27">
    <location>
        <begin position="483"/>
        <end position="485"/>
    </location>
</feature>
<feature type="helix" evidence="27">
    <location>
        <begin position="487"/>
        <end position="492"/>
    </location>
</feature>
<feature type="strand" evidence="27">
    <location>
        <begin position="495"/>
        <end position="497"/>
    </location>
</feature>
<feature type="strand" evidence="27">
    <location>
        <begin position="501"/>
        <end position="505"/>
    </location>
</feature>
<feature type="strand" evidence="27">
    <location>
        <begin position="508"/>
        <end position="512"/>
    </location>
</feature>
<feature type="strand" evidence="27">
    <location>
        <begin position="526"/>
        <end position="528"/>
    </location>
</feature>
<gene>
    <name evidence="20" type="primary">YARS1</name>
    <name evidence="16" type="synonym">YARS</name>
</gene>
<dbReference type="EC" id="6.1.1.1" evidence="7 9 14 18"/>
<dbReference type="EMBL" id="U40714">
    <property type="protein sequence ID" value="AAB39406.1"/>
    <property type="status" value="ALT_FRAME"/>
    <property type="molecule type" value="mRNA"/>
</dbReference>
<dbReference type="EMBL" id="U89436">
    <property type="protein sequence ID" value="AAB88409.1"/>
    <property type="molecule type" value="mRNA"/>
</dbReference>
<dbReference type="EMBL" id="AK125213">
    <property type="protein sequence ID" value="BAG54166.1"/>
    <property type="molecule type" value="mRNA"/>
</dbReference>
<dbReference type="EMBL" id="AK223608">
    <property type="protein sequence ID" value="BAD97328.1"/>
    <property type="molecule type" value="mRNA"/>
</dbReference>
<dbReference type="EMBL" id="CH471059">
    <property type="protein sequence ID" value="EAX07506.1"/>
    <property type="molecule type" value="Genomic_DNA"/>
</dbReference>
<dbReference type="EMBL" id="CH471059">
    <property type="protein sequence ID" value="EAX07507.1"/>
    <property type="molecule type" value="Genomic_DNA"/>
</dbReference>
<dbReference type="EMBL" id="BC001933">
    <property type="protein sequence ID" value="AAH01933.1"/>
    <property type="molecule type" value="mRNA"/>
</dbReference>
<dbReference type="EMBL" id="BC004151">
    <property type="protein sequence ID" value="AAH04151.1"/>
    <property type="molecule type" value="mRNA"/>
</dbReference>
<dbReference type="EMBL" id="BC016689">
    <property type="protein sequence ID" value="AAH16689.1"/>
    <property type="molecule type" value="mRNA"/>
</dbReference>
<dbReference type="CCDS" id="CCDS368.1"/>
<dbReference type="RefSeq" id="NP_003671.1">
    <property type="nucleotide sequence ID" value="NM_003680.4"/>
</dbReference>
<dbReference type="PDB" id="1N3L">
    <property type="method" value="X-ray"/>
    <property type="resolution" value="1.18 A"/>
    <property type="chains" value="A=1-364"/>
</dbReference>
<dbReference type="PDB" id="1NTG">
    <property type="method" value="X-ray"/>
    <property type="resolution" value="2.21 A"/>
    <property type="chains" value="A/B/C/D=359-528"/>
</dbReference>
<dbReference type="PDB" id="1Q11">
    <property type="method" value="X-ray"/>
    <property type="resolution" value="1.60 A"/>
    <property type="chains" value="A=1-364"/>
</dbReference>
<dbReference type="PDB" id="4Q93">
    <property type="method" value="X-ray"/>
    <property type="resolution" value="2.10 A"/>
    <property type="chains" value="A=1-364"/>
</dbReference>
<dbReference type="PDB" id="4QBT">
    <property type="method" value="X-ray"/>
    <property type="resolution" value="2.10 A"/>
    <property type="chains" value="A=1-364"/>
</dbReference>
<dbReference type="PDB" id="5THH">
    <property type="method" value="X-ray"/>
    <property type="resolution" value="1.96 A"/>
    <property type="chains" value="A=4-342"/>
</dbReference>
<dbReference type="PDB" id="5THL">
    <property type="method" value="X-ray"/>
    <property type="resolution" value="1.60 A"/>
    <property type="chains" value="A=1-364"/>
</dbReference>
<dbReference type="PDB" id="7ROU">
    <property type="method" value="X-ray"/>
    <property type="resolution" value="1.70 A"/>
    <property type="chains" value="A=1-364"/>
</dbReference>
<dbReference type="PDBsum" id="1N3L"/>
<dbReference type="PDBsum" id="1NTG"/>
<dbReference type="PDBsum" id="1Q11"/>
<dbReference type="PDBsum" id="4Q93"/>
<dbReference type="PDBsum" id="4QBT"/>
<dbReference type="PDBsum" id="5THH"/>
<dbReference type="PDBsum" id="5THL"/>
<dbReference type="PDBsum" id="7ROU"/>
<dbReference type="SASBDB" id="P54577"/>
<dbReference type="SMR" id="P54577"/>
<dbReference type="BioGRID" id="114134">
    <property type="interactions" value="170"/>
</dbReference>
<dbReference type="DIP" id="DIP-50415N"/>
<dbReference type="FunCoup" id="P54577">
    <property type="interactions" value="2364"/>
</dbReference>
<dbReference type="IntAct" id="P54577">
    <property type="interactions" value="52"/>
</dbReference>
<dbReference type="MINT" id="P54577"/>
<dbReference type="STRING" id="9606.ENSP00000362576"/>
<dbReference type="BindingDB" id="P54577"/>
<dbReference type="ChEMBL" id="CHEMBL3179"/>
<dbReference type="DrugBank" id="DB08617">
    <property type="generic name" value="4-(2,2,2-TRIFLUOROETHYL)-L-PHENYLALANINE"/>
</dbReference>
<dbReference type="DrugBank" id="DB01766">
    <property type="generic name" value="Beta-(2-Naphthyl)-Alanine"/>
</dbReference>
<dbReference type="DrugBank" id="DB07205">
    <property type="generic name" value="N6-ISOPENTENYL-ADENOSINE-5'-MONOPHOSPHATE"/>
</dbReference>
<dbReference type="DrugBank" id="DB08371">
    <property type="generic name" value="p-Benzoyl-L-phenylalanine"/>
</dbReference>
<dbReference type="DrugBank" id="DB02709">
    <property type="generic name" value="Resveratrol"/>
</dbReference>
<dbReference type="DrugBank" id="DB03978">
    <property type="generic name" value="Tyrosinal"/>
</dbReference>
<dbReference type="DrugBank" id="DB00135">
    <property type="generic name" value="Tyrosine"/>
</dbReference>
<dbReference type="DrugCentral" id="P54577"/>
<dbReference type="CarbonylDB" id="P54577"/>
<dbReference type="GlyGen" id="P54577">
    <property type="glycosylation" value="3 sites, 1 O-linked glycan (3 sites)"/>
</dbReference>
<dbReference type="iPTMnet" id="P54577"/>
<dbReference type="MetOSite" id="P54577"/>
<dbReference type="PhosphoSitePlus" id="P54577"/>
<dbReference type="SwissPalm" id="P54577"/>
<dbReference type="BioMuta" id="YARS"/>
<dbReference type="DMDM" id="13638438"/>
<dbReference type="REPRODUCTION-2DPAGE" id="IPI00007074"/>
<dbReference type="CPTAC" id="CPTAC-299"/>
<dbReference type="CPTAC" id="CPTAC-300"/>
<dbReference type="jPOST" id="P54577"/>
<dbReference type="MassIVE" id="P54577"/>
<dbReference type="PaxDb" id="9606-ENSP00000362576"/>
<dbReference type="PeptideAtlas" id="P54577"/>
<dbReference type="ProteomicsDB" id="56686"/>
<dbReference type="Pumba" id="P54577"/>
<dbReference type="ABCD" id="P54577">
    <property type="antibodies" value="2 sequenced antibodies"/>
</dbReference>
<dbReference type="Antibodypedia" id="17005">
    <property type="antibodies" value="265 antibodies from 26 providers"/>
</dbReference>
<dbReference type="DNASU" id="8565"/>
<dbReference type="Ensembl" id="ENST00000373477.9">
    <property type="protein sequence ID" value="ENSP00000362576.4"/>
    <property type="gene ID" value="ENSG00000134684.13"/>
</dbReference>
<dbReference type="GeneID" id="8565"/>
<dbReference type="KEGG" id="hsa:8565"/>
<dbReference type="MANE-Select" id="ENST00000373477.9">
    <property type="protein sequence ID" value="ENSP00000362576.4"/>
    <property type="RefSeq nucleotide sequence ID" value="NM_003680.4"/>
    <property type="RefSeq protein sequence ID" value="NP_003671.1"/>
</dbReference>
<dbReference type="UCSC" id="uc001bvy.2">
    <property type="organism name" value="human"/>
</dbReference>
<dbReference type="AGR" id="HGNC:12840"/>
<dbReference type="CTD" id="8565"/>
<dbReference type="DisGeNET" id="8565"/>
<dbReference type="GeneCards" id="YARS1"/>
<dbReference type="GeneReviews" id="YARS1"/>
<dbReference type="HGNC" id="HGNC:12840">
    <property type="gene designation" value="YARS1"/>
</dbReference>
<dbReference type="HPA" id="ENSG00000134684">
    <property type="expression patterns" value="Low tissue specificity"/>
</dbReference>
<dbReference type="MalaCards" id="YARS1"/>
<dbReference type="MIM" id="603623">
    <property type="type" value="gene"/>
</dbReference>
<dbReference type="MIM" id="608323">
    <property type="type" value="phenotype"/>
</dbReference>
<dbReference type="MIM" id="619418">
    <property type="type" value="phenotype"/>
</dbReference>
<dbReference type="neXtProt" id="NX_P54577"/>
<dbReference type="OpenTargets" id="ENSG00000134684"/>
<dbReference type="Orphanet" id="100045">
    <property type="disease" value="Autosomal dominant intermediate Charcot-Marie-Tooth disease type C"/>
</dbReference>
<dbReference type="PharmGKB" id="PA37431"/>
<dbReference type="VEuPathDB" id="HostDB:ENSG00000134684"/>
<dbReference type="eggNOG" id="KOG2144">
    <property type="taxonomic scope" value="Eukaryota"/>
</dbReference>
<dbReference type="eggNOG" id="KOG2241">
    <property type="taxonomic scope" value="Eukaryota"/>
</dbReference>
<dbReference type="GeneTree" id="ENSGT00940000156949"/>
<dbReference type="HOGENOM" id="CLU_035267_3_0_1"/>
<dbReference type="InParanoid" id="P54577"/>
<dbReference type="OMA" id="RKIHMLA"/>
<dbReference type="OrthoDB" id="197206at2759"/>
<dbReference type="PAN-GO" id="P54577">
    <property type="GO annotations" value="1 GO annotation based on evolutionary models"/>
</dbReference>
<dbReference type="PhylomeDB" id="P54577"/>
<dbReference type="TreeFam" id="TF300898"/>
<dbReference type="BRENDA" id="6.1.1.1">
    <property type="organism ID" value="2681"/>
</dbReference>
<dbReference type="PathwayCommons" id="P54577"/>
<dbReference type="Reactome" id="R-HSA-379716">
    <property type="pathway name" value="Cytosolic tRNA aminoacylation"/>
</dbReference>
<dbReference type="SignaLink" id="P54577"/>
<dbReference type="SIGNOR" id="P54577"/>
<dbReference type="BioGRID-ORCS" id="8565">
    <property type="hits" value="847 hits in 1136 CRISPR screens"/>
</dbReference>
<dbReference type="CD-CODE" id="91857CE7">
    <property type="entry name" value="Nucleolus"/>
</dbReference>
<dbReference type="CD-CODE" id="DEE660B4">
    <property type="entry name" value="Stress granule"/>
</dbReference>
<dbReference type="CD-CODE" id="FB4E32DD">
    <property type="entry name" value="Presynaptic clusters and postsynaptic densities"/>
</dbReference>
<dbReference type="ChiTaRS" id="YARS">
    <property type="organism name" value="human"/>
</dbReference>
<dbReference type="EvolutionaryTrace" id="P54577"/>
<dbReference type="GeneWiki" id="YARS"/>
<dbReference type="GenomeRNAi" id="8565"/>
<dbReference type="Pharos" id="P54577">
    <property type="development level" value="Tchem"/>
</dbReference>
<dbReference type="PRO" id="PR:P54577"/>
<dbReference type="Proteomes" id="UP000005640">
    <property type="component" value="Chromosome 1"/>
</dbReference>
<dbReference type="RNAct" id="P54577">
    <property type="molecule type" value="protein"/>
</dbReference>
<dbReference type="Bgee" id="ENSG00000134684">
    <property type="expression patterns" value="Expressed in right adrenal gland and 210 other cell types or tissues"/>
</dbReference>
<dbReference type="ExpressionAtlas" id="P54577">
    <property type="expression patterns" value="baseline and differential"/>
</dbReference>
<dbReference type="GO" id="GO:0005737">
    <property type="term" value="C:cytoplasm"/>
    <property type="evidence" value="ECO:0000314"/>
    <property type="project" value="UniProt"/>
</dbReference>
<dbReference type="GO" id="GO:0005829">
    <property type="term" value="C:cytosol"/>
    <property type="evidence" value="ECO:0000314"/>
    <property type="project" value="UniProtKB"/>
</dbReference>
<dbReference type="GO" id="GO:0005615">
    <property type="term" value="C:extracellular space"/>
    <property type="evidence" value="ECO:0000304"/>
    <property type="project" value="ProtInc"/>
</dbReference>
<dbReference type="GO" id="GO:0016604">
    <property type="term" value="C:nuclear body"/>
    <property type="evidence" value="ECO:0000314"/>
    <property type="project" value="HPA"/>
</dbReference>
<dbReference type="GO" id="GO:0005634">
    <property type="term" value="C:nucleus"/>
    <property type="evidence" value="ECO:0000314"/>
    <property type="project" value="UniProtKB"/>
</dbReference>
<dbReference type="GO" id="GO:0005524">
    <property type="term" value="F:ATP binding"/>
    <property type="evidence" value="ECO:0007669"/>
    <property type="project" value="UniProtKB-KW"/>
</dbReference>
<dbReference type="GO" id="GO:0005153">
    <property type="term" value="F:interleukin-8 receptor binding"/>
    <property type="evidence" value="ECO:0000304"/>
    <property type="project" value="ProtInc"/>
</dbReference>
<dbReference type="GO" id="GO:0003723">
    <property type="term" value="F:RNA binding"/>
    <property type="evidence" value="ECO:0007005"/>
    <property type="project" value="UniProtKB"/>
</dbReference>
<dbReference type="GO" id="GO:0036094">
    <property type="term" value="F:small molecule binding"/>
    <property type="evidence" value="ECO:0000314"/>
    <property type="project" value="UniProtKB"/>
</dbReference>
<dbReference type="GO" id="GO:0000049">
    <property type="term" value="F:tRNA binding"/>
    <property type="evidence" value="ECO:0007669"/>
    <property type="project" value="UniProtKB-KW"/>
</dbReference>
<dbReference type="GO" id="GO:0004831">
    <property type="term" value="F:tyrosine-tRNA ligase activity"/>
    <property type="evidence" value="ECO:0000314"/>
    <property type="project" value="UniProtKB"/>
</dbReference>
<dbReference type="GO" id="GO:0006915">
    <property type="term" value="P:apoptotic process"/>
    <property type="evidence" value="ECO:0000304"/>
    <property type="project" value="ProtInc"/>
</dbReference>
<dbReference type="GO" id="GO:0042594">
    <property type="term" value="P:response to starvation"/>
    <property type="evidence" value="ECO:0000314"/>
    <property type="project" value="UniProt"/>
</dbReference>
<dbReference type="GO" id="GO:0006437">
    <property type="term" value="P:tyrosyl-tRNA aminoacylation"/>
    <property type="evidence" value="ECO:0000314"/>
    <property type="project" value="UniProt"/>
</dbReference>
<dbReference type="CDD" id="cd02799">
    <property type="entry name" value="tRNA_bind_EMAP-II_like"/>
    <property type="match status" value="1"/>
</dbReference>
<dbReference type="CDD" id="cd00805">
    <property type="entry name" value="TyrRS_core"/>
    <property type="match status" value="1"/>
</dbReference>
<dbReference type="FunFam" id="1.10.240.10:FF:000004">
    <property type="entry name" value="Tyrosine--tRNA ligase"/>
    <property type="match status" value="1"/>
</dbReference>
<dbReference type="FunFam" id="3.40.50.620:FF:000040">
    <property type="entry name" value="Tyrosine--tRNA ligase"/>
    <property type="match status" value="1"/>
</dbReference>
<dbReference type="FunFam" id="2.40.50.140:FF:000047">
    <property type="entry name" value="tyrosine--tRNA ligase, cytoplasmic isoform X2"/>
    <property type="match status" value="1"/>
</dbReference>
<dbReference type="Gene3D" id="3.40.50.620">
    <property type="entry name" value="HUPs"/>
    <property type="match status" value="1"/>
</dbReference>
<dbReference type="Gene3D" id="2.40.50.140">
    <property type="entry name" value="Nucleic acid-binding proteins"/>
    <property type="match status" value="1"/>
</dbReference>
<dbReference type="Gene3D" id="1.10.240.10">
    <property type="entry name" value="Tyrosyl-Transfer RNA Synthetase"/>
    <property type="match status" value="1"/>
</dbReference>
<dbReference type="InterPro" id="IPR002305">
    <property type="entry name" value="aa-tRNA-synth_Ic"/>
</dbReference>
<dbReference type="InterPro" id="IPR012340">
    <property type="entry name" value="NA-bd_OB-fold"/>
</dbReference>
<dbReference type="InterPro" id="IPR014729">
    <property type="entry name" value="Rossmann-like_a/b/a_fold"/>
</dbReference>
<dbReference type="InterPro" id="IPR002547">
    <property type="entry name" value="tRNA-bd_dom"/>
</dbReference>
<dbReference type="InterPro" id="IPR002307">
    <property type="entry name" value="Tyr-tRNA-ligase"/>
</dbReference>
<dbReference type="InterPro" id="IPR051270">
    <property type="entry name" value="Tyrosine-tRNA_ligase_regulator"/>
</dbReference>
<dbReference type="NCBIfam" id="NF006330">
    <property type="entry name" value="PRK08560.1"/>
    <property type="match status" value="1"/>
</dbReference>
<dbReference type="NCBIfam" id="TIGR00234">
    <property type="entry name" value="tyrS"/>
    <property type="match status" value="1"/>
</dbReference>
<dbReference type="PANTHER" id="PTHR11586">
    <property type="entry name" value="TRNA-AMINOACYLATION COFACTOR ARC1 FAMILY MEMBER"/>
    <property type="match status" value="1"/>
</dbReference>
<dbReference type="PANTHER" id="PTHR11586:SF43">
    <property type="entry name" value="TYROSINE--TRNA LIGASE, CYTOPLASMIC"/>
    <property type="match status" value="1"/>
</dbReference>
<dbReference type="Pfam" id="PF00579">
    <property type="entry name" value="tRNA-synt_1b"/>
    <property type="match status" value="1"/>
</dbReference>
<dbReference type="Pfam" id="PF01588">
    <property type="entry name" value="tRNA_bind"/>
    <property type="match status" value="1"/>
</dbReference>
<dbReference type="PRINTS" id="PR01040">
    <property type="entry name" value="TRNASYNTHTYR"/>
</dbReference>
<dbReference type="SUPFAM" id="SSF50249">
    <property type="entry name" value="Nucleic acid-binding proteins"/>
    <property type="match status" value="1"/>
</dbReference>
<dbReference type="SUPFAM" id="SSF52374">
    <property type="entry name" value="Nucleotidylyl transferase"/>
    <property type="match status" value="1"/>
</dbReference>
<dbReference type="PROSITE" id="PS50886">
    <property type="entry name" value="TRBD"/>
    <property type="match status" value="1"/>
</dbReference>
<accession>P54577</accession>
<accession>B3KWK4</accession>
<accession>D3DPQ4</accession>
<accession>O43276</accession>
<accession>Q53EN1</accession>
<protein>
    <recommendedName>
        <fullName>Tyrosine--tRNA ligase, cytoplasmic</fullName>
        <ecNumber evidence="7 9 14 18">6.1.1.1</ecNumber>
    </recommendedName>
    <alternativeName>
        <fullName>Tyrosyl-tRNA synthetase</fullName>
        <shortName>TyrRS</shortName>
    </alternativeName>
    <component>
        <recommendedName>
            <fullName>Tyrosine--tRNA ligase, cytoplasmic, N-terminally processed</fullName>
        </recommendedName>
    </component>
</protein>